<dbReference type="EC" id="3.4.14.10" evidence="2"/>
<dbReference type="EMBL" id="BC142343">
    <property type="protein sequence ID" value="AAI42344.1"/>
    <property type="molecule type" value="mRNA"/>
</dbReference>
<dbReference type="RefSeq" id="NP_001092504.1">
    <property type="nucleotide sequence ID" value="NM_001099034.2"/>
</dbReference>
<dbReference type="SMR" id="A5PK39"/>
<dbReference type="FunCoup" id="A5PK39">
    <property type="interactions" value="4408"/>
</dbReference>
<dbReference type="STRING" id="9913.ENSBTAP00000067120"/>
<dbReference type="MEROPS" id="S08.A56"/>
<dbReference type="PaxDb" id="9913-ENSBTAP00000035243"/>
<dbReference type="GeneID" id="526052"/>
<dbReference type="KEGG" id="bta:526052"/>
<dbReference type="CTD" id="7174"/>
<dbReference type="eggNOG" id="KOG1114">
    <property type="taxonomic scope" value="Eukaryota"/>
</dbReference>
<dbReference type="InParanoid" id="A5PK39"/>
<dbReference type="OrthoDB" id="10256524at2759"/>
<dbReference type="Proteomes" id="UP000009136">
    <property type="component" value="Unplaced"/>
</dbReference>
<dbReference type="GO" id="GO:0005829">
    <property type="term" value="C:cytosol"/>
    <property type="evidence" value="ECO:0000318"/>
    <property type="project" value="GO_Central"/>
</dbReference>
<dbReference type="GO" id="GO:0005634">
    <property type="term" value="C:nucleus"/>
    <property type="evidence" value="ECO:0007669"/>
    <property type="project" value="UniProtKB-SubCell"/>
</dbReference>
<dbReference type="GO" id="GO:0004177">
    <property type="term" value="F:aminopeptidase activity"/>
    <property type="evidence" value="ECO:0000250"/>
    <property type="project" value="UniProtKB"/>
</dbReference>
<dbReference type="GO" id="GO:0004252">
    <property type="term" value="F:serine-type endopeptidase activity"/>
    <property type="evidence" value="ECO:0007669"/>
    <property type="project" value="InterPro"/>
</dbReference>
<dbReference type="GO" id="GO:0008240">
    <property type="term" value="F:tripeptidyl-peptidase activity"/>
    <property type="evidence" value="ECO:0000318"/>
    <property type="project" value="GO_Central"/>
</dbReference>
<dbReference type="GO" id="GO:0006508">
    <property type="term" value="P:proteolysis"/>
    <property type="evidence" value="ECO:0007669"/>
    <property type="project" value="UniProtKB-KW"/>
</dbReference>
<dbReference type="CDD" id="cd04857">
    <property type="entry name" value="Peptidases_S8_Tripeptidyl_Aminopeptidase_II"/>
    <property type="match status" value="1"/>
</dbReference>
<dbReference type="FunFam" id="1.25.40.710:FF:000001">
    <property type="entry name" value="Tripeptidyl peptidase 2"/>
    <property type="match status" value="1"/>
</dbReference>
<dbReference type="FunFam" id="2.60.40.3170:FF:000001">
    <property type="entry name" value="Tripeptidyl peptidase 2"/>
    <property type="match status" value="1"/>
</dbReference>
<dbReference type="FunFam" id="3.40.50.200:FF:000003">
    <property type="entry name" value="Tripeptidyl peptidase 2"/>
    <property type="match status" value="1"/>
</dbReference>
<dbReference type="FunFam" id="3.40.50.200:FF:000009">
    <property type="entry name" value="tripeptidyl-peptidase 2 isoform X1"/>
    <property type="match status" value="1"/>
</dbReference>
<dbReference type="Gene3D" id="1.25.40.710">
    <property type="match status" value="1"/>
</dbReference>
<dbReference type="Gene3D" id="2.60.40.3170">
    <property type="match status" value="1"/>
</dbReference>
<dbReference type="Gene3D" id="6.10.250.3080">
    <property type="match status" value="1"/>
</dbReference>
<dbReference type="Gene3D" id="3.40.50.200">
    <property type="entry name" value="Peptidase S8/S53 domain"/>
    <property type="match status" value="2"/>
</dbReference>
<dbReference type="InterPro" id="IPR000209">
    <property type="entry name" value="Peptidase_S8/S53_dom"/>
</dbReference>
<dbReference type="InterPro" id="IPR036852">
    <property type="entry name" value="Peptidase_S8/S53_dom_sf"/>
</dbReference>
<dbReference type="InterPro" id="IPR022398">
    <property type="entry name" value="Peptidase_S8_His-AS"/>
</dbReference>
<dbReference type="InterPro" id="IPR023828">
    <property type="entry name" value="Peptidase_S8_Ser-AS"/>
</dbReference>
<dbReference type="InterPro" id="IPR050131">
    <property type="entry name" value="Peptidase_S8_subtilisin-like"/>
</dbReference>
<dbReference type="InterPro" id="IPR015500">
    <property type="entry name" value="Peptidase_S8_subtilisin-rel"/>
</dbReference>
<dbReference type="InterPro" id="IPR034051">
    <property type="entry name" value="TPP_II_domain"/>
</dbReference>
<dbReference type="InterPro" id="IPR022232">
    <property type="entry name" value="TPPII_C_art"/>
</dbReference>
<dbReference type="InterPro" id="IPR046939">
    <property type="entry name" value="TPPII_C_sf"/>
</dbReference>
<dbReference type="InterPro" id="IPR048384">
    <property type="entry name" value="TPPII_GBD"/>
</dbReference>
<dbReference type="InterPro" id="IPR048383">
    <property type="entry name" value="TPPII_Ig-like-1"/>
</dbReference>
<dbReference type="InterPro" id="IPR022229">
    <property type="entry name" value="TPPII_Ig-like-2"/>
</dbReference>
<dbReference type="InterPro" id="IPR046940">
    <property type="entry name" value="TPPII_Ig-like_sf"/>
</dbReference>
<dbReference type="PANTHER" id="PTHR43806">
    <property type="entry name" value="PEPTIDASE S8"/>
    <property type="match status" value="1"/>
</dbReference>
<dbReference type="PANTHER" id="PTHR43806:SF14">
    <property type="entry name" value="TRIPEPTIDYL-PEPTIDASE 2"/>
    <property type="match status" value="1"/>
</dbReference>
<dbReference type="Pfam" id="PF00082">
    <property type="entry name" value="Peptidase_S8"/>
    <property type="match status" value="1"/>
</dbReference>
<dbReference type="Pfam" id="PF12580">
    <property type="entry name" value="TPPII"/>
    <property type="match status" value="1"/>
</dbReference>
<dbReference type="Pfam" id="PF12583">
    <property type="entry name" value="TPPII_C"/>
    <property type="match status" value="1"/>
</dbReference>
<dbReference type="Pfam" id="PF21316">
    <property type="entry name" value="TPPII_GBD"/>
    <property type="match status" value="1"/>
</dbReference>
<dbReference type="Pfam" id="PF21223">
    <property type="entry name" value="TPPII_Ig-like-1"/>
    <property type="match status" value="1"/>
</dbReference>
<dbReference type="PRINTS" id="PR00723">
    <property type="entry name" value="SUBTILISIN"/>
</dbReference>
<dbReference type="SUPFAM" id="SSF52743">
    <property type="entry name" value="Subtilisin-like"/>
    <property type="match status" value="1"/>
</dbReference>
<dbReference type="PROSITE" id="PS51892">
    <property type="entry name" value="SUBTILASE"/>
    <property type="match status" value="1"/>
</dbReference>
<dbReference type="PROSITE" id="PS00137">
    <property type="entry name" value="SUBTILASE_HIS"/>
    <property type="match status" value="1"/>
</dbReference>
<dbReference type="PROSITE" id="PS00138">
    <property type="entry name" value="SUBTILASE_SER"/>
    <property type="match status" value="1"/>
</dbReference>
<gene>
    <name type="primary">TPP2</name>
</gene>
<keyword id="KW-0007">Acetylation</keyword>
<keyword id="KW-0031">Aminopeptidase</keyword>
<keyword id="KW-0963">Cytoplasm</keyword>
<keyword id="KW-0378">Hydrolase</keyword>
<keyword id="KW-0539">Nucleus</keyword>
<keyword id="KW-0597">Phosphoprotein</keyword>
<keyword id="KW-0645">Protease</keyword>
<keyword id="KW-1185">Reference proteome</keyword>
<keyword id="KW-0720">Serine protease</keyword>
<comment type="function">
    <text evidence="2 3">Cytosolic tripeptidyl-peptidase that releases N-terminal tripeptides from polypeptides and is a component of the proteolytic cascade acting downstream of the 26S proteasome in the ubiquitin-proteasome pathway. It plays an important role in intracellular amino acid homeostasis (By similarity). Stimulates adipogenesis (By similarity).</text>
</comment>
<comment type="catalytic activity">
    <reaction evidence="2">
        <text>Release of an N-terminal tripeptide from a polypeptide.</text>
        <dbReference type="EC" id="3.4.14.10"/>
    </reaction>
</comment>
<comment type="subcellular location">
    <subcellularLocation>
        <location>Cytoplasm</location>
    </subcellularLocation>
    <subcellularLocation>
        <location>Nucleus</location>
    </subcellularLocation>
    <text evidence="1">Translocates to the nucleus in response to gamma-irradiation.</text>
</comment>
<comment type="miscellaneous">
    <text evidence="1">The limitation of proteolytic products to tripeptides is achieved by tailoring the size of the substrate-binding cleft: the two negatively charged residues Glu-305 and Glu-331 that are blocking position P4 limit the number of residues that can be accommodated in the binding cleft and thus create a molecular ruler. At the same time, they orient substrates so that the tripeptides are removed exclusively from the N-terminus (By similarity).</text>
</comment>
<comment type="similarity">
    <text evidence="6">Belongs to the peptidase S8 family.</text>
</comment>
<organism>
    <name type="scientific">Bos taurus</name>
    <name type="common">Bovine</name>
    <dbReference type="NCBI Taxonomy" id="9913"/>
    <lineage>
        <taxon>Eukaryota</taxon>
        <taxon>Metazoa</taxon>
        <taxon>Chordata</taxon>
        <taxon>Craniata</taxon>
        <taxon>Vertebrata</taxon>
        <taxon>Euteleostomi</taxon>
        <taxon>Mammalia</taxon>
        <taxon>Eutheria</taxon>
        <taxon>Laurasiatheria</taxon>
        <taxon>Artiodactyla</taxon>
        <taxon>Ruminantia</taxon>
        <taxon>Pecora</taxon>
        <taxon>Bovidae</taxon>
        <taxon>Bovinae</taxon>
        <taxon>Bos</taxon>
    </lineage>
</organism>
<name>TPP2_BOVIN</name>
<reference key="1">
    <citation type="submission" date="2007-06" db="EMBL/GenBank/DDBJ databases">
        <authorList>
            <consortium name="NIH - Mammalian Gene Collection (MGC) project"/>
        </authorList>
    </citation>
    <scope>NUCLEOTIDE SEQUENCE [LARGE SCALE MRNA]</scope>
    <source>
        <strain>Hereford</strain>
        <tissue>Fetal pons</tissue>
    </source>
</reference>
<evidence type="ECO:0000250" key="1"/>
<evidence type="ECO:0000250" key="2">
    <source>
        <dbReference type="UniProtKB" id="P29144"/>
    </source>
</evidence>
<evidence type="ECO:0000250" key="3">
    <source>
        <dbReference type="UniProtKB" id="Q64514"/>
    </source>
</evidence>
<evidence type="ECO:0000255" key="4">
    <source>
        <dbReference type="PROSITE-ProRule" id="PRU01240"/>
    </source>
</evidence>
<evidence type="ECO:0000256" key="5">
    <source>
        <dbReference type="SAM" id="MobiDB-lite"/>
    </source>
</evidence>
<evidence type="ECO:0000305" key="6"/>
<accession>A5PK39</accession>
<feature type="initiator methionine" description="Removed" evidence="2">
    <location>
        <position position="1"/>
    </location>
</feature>
<feature type="chain" id="PRO_0000310394" description="Tripeptidyl-peptidase 2">
    <location>
        <begin position="2"/>
        <end position="1249"/>
    </location>
</feature>
<feature type="domain" description="Peptidase S8" evidence="4">
    <location>
        <begin position="9"/>
        <end position="508"/>
    </location>
</feature>
<feature type="region of interest" description="Disordered" evidence="5">
    <location>
        <begin position="998"/>
        <end position="1017"/>
    </location>
</feature>
<feature type="region of interest" description="Disordered" evidence="5">
    <location>
        <begin position="1141"/>
        <end position="1161"/>
    </location>
</feature>
<feature type="compositionally biased region" description="Basic and acidic residues" evidence="5">
    <location>
        <begin position="1003"/>
        <end position="1017"/>
    </location>
</feature>
<feature type="active site" description="Charge relay system" evidence="4">
    <location>
        <position position="44"/>
    </location>
</feature>
<feature type="active site" description="Charge relay system" evidence="4">
    <location>
        <position position="264"/>
    </location>
</feature>
<feature type="active site" description="Charge relay system" evidence="4">
    <location>
        <position position="449"/>
    </location>
</feature>
<feature type="modified residue" description="N-acetylalanine" evidence="2">
    <location>
        <position position="2"/>
    </location>
</feature>
<feature type="modified residue" description="N6-acetyllysine" evidence="3">
    <location>
        <position position="401"/>
    </location>
</feature>
<feature type="modified residue" description="Phosphoserine" evidence="2">
    <location>
        <position position="915"/>
    </location>
</feature>
<sequence length="1249" mass="138361">MATAATEEPFPFHGLLPKKETGAAAFLCRYPEYDGRGVLIAVLDTGVDPGAPGMQVTTDGKPKIIDIIDTTGSGDVNTATVVEPKDGEIVGLSGRVLKIPVTWTNPSGRYHIGIKNGYDFYPKALKERIQKERKEKIWDPVHRAALAEACRKQEEFDVANNCPSQANKLIKEELHSQVELLNSFEKKYSDPGPVYDCLVWFDGETWRACIDSSEDGDLSKSTVLRNYKEAQEYGSFGAAEMLNYSVNIYDDGNLLSIVTSGGAHGTHVASIAAGHFPEEPERNGVAPGAQILSIKIGDTRLSTMETGTGLIRAMIEVINHKCDLVNYSYGEATHWPNSGRICEVINEAVWKHNIIYVSSAGNNGPCLSTVGCPGGTTSSVIGVGAYVSPDMMVAEYSLREKLPANQYTWSSRGPSADGALGVSVSAPGGAIASVPNWTLRGTQLMNGTSMSSPNACGGIALVLSGLKANDVNYTVHSVRRALENTAVKADNIEVFAQGHGIIQVDKAYDYLVQNTSFANKLGFTVTVGTNRGIYLRDPVQVAAPSDHGVGIEPVFPENTENSEKISLQLHLALTSNSSWVQCPSHLELMNQCRHVNIRVDPRGLREGLHYTEVCGYDIASPNAGPLFRVPITAVIAAKVNESTHYDLALTDVHFKPGQIRRHFIEVPEGATWAEVTVCSCSSEVSAKFVLHAVQLVKQRAYRSHEFYKFCSLPEKGTLTEAFPVLGGKAIEFCIARWWASLSDVNIDYTVSFHGIVCTAPQLNIHSSEGINRFDVQSSLKYEDLAPCITLKSWVQTLRPLSAKTKPLGSRDVLPNNRQLYEMILTYNFHQPKSGEVTPSCPLLCELLYESEFDSQLWIIFDQNKRQMGSGDAYPHQYSLKLEKGDYTIRLQIRHEQISDLERLKDLPFIVSHRLSNTLSLDIHENHSLALLGKKKSSNLTLPPKYNQPFFVTSLPDDKIPKGAGPGCYLTGSLTLSKTELGKKADVIPVHYYLISPPTKTKNGSKDKEKDSEKEKDLKEEFTEALRDLKIQWMTKLDSSDIYNELKETYPNYLPLYVARLHQLDAEKERMKRLNEIVEAANAVISHIDQTALAVYIAMKTDPRPDAAIIKNDMDKQKSTLVDALCRKGCALADHLLQAQDQDGAVSSDSEGREEEGESTLDSLTETFWETTKWTDLFDNKVLTFAYKHALVNKMYGRGLKFATKLVEEKPTKENWKNCIQLMKLLGWTHCASFTENWLPIMYPPDYCVF</sequence>
<protein>
    <recommendedName>
        <fullName>Tripeptidyl-peptidase 2</fullName>
        <shortName>TPP-2</shortName>
        <ecNumber evidence="2">3.4.14.10</ecNumber>
    </recommendedName>
    <alternativeName>
        <fullName>Tripeptidyl aminopeptidase</fullName>
    </alternativeName>
    <alternativeName>
        <fullName>Tripeptidyl-peptidase II</fullName>
        <shortName>TPP-II</shortName>
    </alternativeName>
</protein>
<proteinExistence type="evidence at transcript level"/>